<protein>
    <recommendedName>
        <fullName>Probable phosphoserine phosphatase</fullName>
        <shortName>PSP</shortName>
        <shortName>PSPase</shortName>
        <ecNumber>3.1.3.3</ecNumber>
    </recommendedName>
    <alternativeName>
        <fullName>O-phosphoserine phosphohydrolase</fullName>
    </alternativeName>
</protein>
<comment type="catalytic activity">
    <reaction>
        <text>O-phospho-L-serine + H2O = L-serine + phosphate</text>
        <dbReference type="Rhea" id="RHEA:21208"/>
        <dbReference type="ChEBI" id="CHEBI:15377"/>
        <dbReference type="ChEBI" id="CHEBI:33384"/>
        <dbReference type="ChEBI" id="CHEBI:43474"/>
        <dbReference type="ChEBI" id="CHEBI:57524"/>
        <dbReference type="EC" id="3.1.3.3"/>
    </reaction>
</comment>
<comment type="catalytic activity">
    <reaction>
        <text>O-phospho-D-serine + H2O = D-serine + phosphate</text>
        <dbReference type="Rhea" id="RHEA:24873"/>
        <dbReference type="ChEBI" id="CHEBI:15377"/>
        <dbReference type="ChEBI" id="CHEBI:35247"/>
        <dbReference type="ChEBI" id="CHEBI:43474"/>
        <dbReference type="ChEBI" id="CHEBI:58680"/>
        <dbReference type="EC" id="3.1.3.3"/>
    </reaction>
</comment>
<comment type="cofactor">
    <cofactor evidence="1">
        <name>Mg(2+)</name>
        <dbReference type="ChEBI" id="CHEBI:18420"/>
    </cofactor>
    <text evidence="1">Binds 1 Mg(2+) ion per subunit.</text>
</comment>
<comment type="pathway">
    <text>Amino-acid biosynthesis; L-serine biosynthesis; L-serine from 3-phospho-D-glycerate: step 3/3.</text>
</comment>
<comment type="similarity">
    <text evidence="2">Belongs to the HAD-like hydrolase superfamily. SerB family.</text>
</comment>
<comment type="sequence caution" evidence="2">
    <conflict type="frameshift">
        <sequence resource="EMBL-CDS" id="BAA13922"/>
    </conflict>
</comment>
<sequence>MVNAAIVVSSNRPNVLEQISSLFRDGKTRSLGEQWTLVSGQLKGTFEDAKDACNRISATENVDCNCLSEATFSTKKKLVVFDMDSTLIQQECIDELAAEAGIQKEVATITSLAMNGEIDFQESLRRRVSLLQGLSVDVINKVIGKITFTPGAKQLCHCLKQMGATLVVASGGFVPMAEYVKGQLDLDYAYANVLEFSDDGKFLTGKVQGAIVDGQRKASILREKREELGLNKLETMAVGDGANDLVMMAESGLGIAFKAKPKVQLLADSKINLPSLQNALYLLGIDEQQQKKLLENKN</sequence>
<feature type="chain" id="PRO_0000156884" description="Probable phosphoserine phosphatase">
    <location>
        <begin position="1"/>
        <end position="298"/>
    </location>
</feature>
<feature type="active site" description="Nucleophile" evidence="1">
    <location>
        <position position="82"/>
    </location>
</feature>
<feature type="active site" description="Proton donor" evidence="1">
    <location>
        <position position="84"/>
    </location>
</feature>
<feature type="binding site" evidence="1">
    <location>
        <position position="82"/>
    </location>
    <ligand>
        <name>Mg(2+)</name>
        <dbReference type="ChEBI" id="CHEBI:18420"/>
    </ligand>
</feature>
<feature type="binding site" evidence="1">
    <location>
        <position position="84"/>
    </location>
    <ligand>
        <name>Mg(2+)</name>
        <dbReference type="ChEBI" id="CHEBI:18420"/>
    </ligand>
</feature>
<feature type="binding site" evidence="1">
    <location>
        <position position="91"/>
    </location>
    <ligand>
        <name>substrate</name>
    </ligand>
</feature>
<feature type="binding site" evidence="1">
    <location>
        <position position="127"/>
    </location>
    <ligand>
        <name>substrate</name>
    </ligand>
</feature>
<feature type="binding site" evidence="1">
    <location>
        <begin position="170"/>
        <end position="171"/>
    </location>
    <ligand>
        <name>substrate</name>
    </ligand>
</feature>
<feature type="binding site" evidence="1">
    <location>
        <position position="217"/>
    </location>
    <ligand>
        <name>substrate</name>
    </ligand>
</feature>
<feature type="binding site" evidence="1">
    <location>
        <position position="240"/>
    </location>
    <ligand>
        <name>Mg(2+)</name>
        <dbReference type="ChEBI" id="CHEBI:18420"/>
    </ligand>
</feature>
<feature type="binding site" evidence="1">
    <location>
        <position position="243"/>
    </location>
    <ligand>
        <name>substrate</name>
    </ligand>
</feature>
<accession>O74382</accession>
<accession>P78910</accession>
<organism>
    <name type="scientific">Schizosaccharomyces pombe (strain 972 / ATCC 24843)</name>
    <name type="common">Fission yeast</name>
    <dbReference type="NCBI Taxonomy" id="284812"/>
    <lineage>
        <taxon>Eukaryota</taxon>
        <taxon>Fungi</taxon>
        <taxon>Dikarya</taxon>
        <taxon>Ascomycota</taxon>
        <taxon>Taphrinomycotina</taxon>
        <taxon>Schizosaccharomycetes</taxon>
        <taxon>Schizosaccharomycetales</taxon>
        <taxon>Schizosaccharomycetaceae</taxon>
        <taxon>Schizosaccharomyces</taxon>
    </lineage>
</organism>
<name>SERB_SCHPO</name>
<keyword id="KW-0028">Amino-acid biosynthesis</keyword>
<keyword id="KW-0378">Hydrolase</keyword>
<keyword id="KW-0460">Magnesium</keyword>
<keyword id="KW-0479">Metal-binding</keyword>
<keyword id="KW-1185">Reference proteome</keyword>
<keyword id="KW-0718">Serine biosynthesis</keyword>
<evidence type="ECO:0000250" key="1"/>
<evidence type="ECO:0000305" key="2"/>
<reference key="1">
    <citation type="journal article" date="1997" name="DNA Res.">
        <title>Identification of open reading frames in Schizosaccharomyces pombe cDNAs.</title>
        <authorList>
            <person name="Yoshioka S."/>
            <person name="Kato K."/>
            <person name="Nakai K."/>
            <person name="Okayama H."/>
            <person name="Nojima H."/>
        </authorList>
    </citation>
    <scope>NUCLEOTIDE SEQUENCE [LARGE SCALE MRNA]</scope>
    <source>
        <strain>PR745</strain>
    </source>
</reference>
<reference key="2">
    <citation type="journal article" date="2002" name="Nature">
        <title>The genome sequence of Schizosaccharomyces pombe.</title>
        <authorList>
            <person name="Wood V."/>
            <person name="Gwilliam R."/>
            <person name="Rajandream M.A."/>
            <person name="Lyne M.H."/>
            <person name="Lyne R."/>
            <person name="Stewart A."/>
            <person name="Sgouros J.G."/>
            <person name="Peat N."/>
            <person name="Hayles J."/>
            <person name="Baker S.G."/>
            <person name="Basham D."/>
            <person name="Bowman S."/>
            <person name="Brooks K."/>
            <person name="Brown D."/>
            <person name="Brown S."/>
            <person name="Chillingworth T."/>
            <person name="Churcher C.M."/>
            <person name="Collins M."/>
            <person name="Connor R."/>
            <person name="Cronin A."/>
            <person name="Davis P."/>
            <person name="Feltwell T."/>
            <person name="Fraser A."/>
            <person name="Gentles S."/>
            <person name="Goble A."/>
            <person name="Hamlin N."/>
            <person name="Harris D.E."/>
            <person name="Hidalgo J."/>
            <person name="Hodgson G."/>
            <person name="Holroyd S."/>
            <person name="Hornsby T."/>
            <person name="Howarth S."/>
            <person name="Huckle E.J."/>
            <person name="Hunt S."/>
            <person name="Jagels K."/>
            <person name="James K.D."/>
            <person name="Jones L."/>
            <person name="Jones M."/>
            <person name="Leather S."/>
            <person name="McDonald S."/>
            <person name="McLean J."/>
            <person name="Mooney P."/>
            <person name="Moule S."/>
            <person name="Mungall K.L."/>
            <person name="Murphy L.D."/>
            <person name="Niblett D."/>
            <person name="Odell C."/>
            <person name="Oliver K."/>
            <person name="O'Neil S."/>
            <person name="Pearson D."/>
            <person name="Quail M.A."/>
            <person name="Rabbinowitsch E."/>
            <person name="Rutherford K.M."/>
            <person name="Rutter S."/>
            <person name="Saunders D."/>
            <person name="Seeger K."/>
            <person name="Sharp S."/>
            <person name="Skelton J."/>
            <person name="Simmonds M.N."/>
            <person name="Squares R."/>
            <person name="Squares S."/>
            <person name="Stevens K."/>
            <person name="Taylor K."/>
            <person name="Taylor R.G."/>
            <person name="Tivey A."/>
            <person name="Walsh S.V."/>
            <person name="Warren T."/>
            <person name="Whitehead S."/>
            <person name="Woodward J.R."/>
            <person name="Volckaert G."/>
            <person name="Aert R."/>
            <person name="Robben J."/>
            <person name="Grymonprez B."/>
            <person name="Weltjens I."/>
            <person name="Vanstreels E."/>
            <person name="Rieger M."/>
            <person name="Schaefer M."/>
            <person name="Mueller-Auer S."/>
            <person name="Gabel C."/>
            <person name="Fuchs M."/>
            <person name="Duesterhoeft A."/>
            <person name="Fritzc C."/>
            <person name="Holzer E."/>
            <person name="Moestl D."/>
            <person name="Hilbert H."/>
            <person name="Borzym K."/>
            <person name="Langer I."/>
            <person name="Beck A."/>
            <person name="Lehrach H."/>
            <person name="Reinhardt R."/>
            <person name="Pohl T.M."/>
            <person name="Eger P."/>
            <person name="Zimmermann W."/>
            <person name="Wedler H."/>
            <person name="Wambutt R."/>
            <person name="Purnelle B."/>
            <person name="Goffeau A."/>
            <person name="Cadieu E."/>
            <person name="Dreano S."/>
            <person name="Gloux S."/>
            <person name="Lelaure V."/>
            <person name="Mottier S."/>
            <person name="Galibert F."/>
            <person name="Aves S.J."/>
            <person name="Xiang Z."/>
            <person name="Hunt C."/>
            <person name="Moore K."/>
            <person name="Hurst S.M."/>
            <person name="Lucas M."/>
            <person name="Rochet M."/>
            <person name="Gaillardin C."/>
            <person name="Tallada V.A."/>
            <person name="Garzon A."/>
            <person name="Thode G."/>
            <person name="Daga R.R."/>
            <person name="Cruzado L."/>
            <person name="Jimenez J."/>
            <person name="Sanchez M."/>
            <person name="del Rey F."/>
            <person name="Benito J."/>
            <person name="Dominguez A."/>
            <person name="Revuelta J.L."/>
            <person name="Moreno S."/>
            <person name="Armstrong J."/>
            <person name="Forsburg S.L."/>
            <person name="Cerutti L."/>
            <person name="Lowe T."/>
            <person name="McCombie W.R."/>
            <person name="Paulsen I."/>
            <person name="Potashkin J."/>
            <person name="Shpakovski G.V."/>
            <person name="Ussery D."/>
            <person name="Barrell B.G."/>
            <person name="Nurse P."/>
        </authorList>
    </citation>
    <scope>NUCLEOTIDE SEQUENCE [LARGE SCALE GENOMIC DNA]</scope>
    <source>
        <strain>972 / ATCC 24843</strain>
    </source>
</reference>
<proteinExistence type="evidence at transcript level"/>
<gene>
    <name type="ORF">SPBC3H7.07c</name>
</gene>
<dbReference type="EC" id="3.1.3.3"/>
<dbReference type="EMBL" id="D89261">
    <property type="protein sequence ID" value="BAA13922.1"/>
    <property type="status" value="ALT_FRAME"/>
    <property type="molecule type" value="mRNA"/>
</dbReference>
<dbReference type="EMBL" id="CU329671">
    <property type="protein sequence ID" value="CAA20303.1"/>
    <property type="molecule type" value="Genomic_DNA"/>
</dbReference>
<dbReference type="PIR" id="T40408">
    <property type="entry name" value="T40408"/>
</dbReference>
<dbReference type="PIR" id="T43186">
    <property type="entry name" value="T43186"/>
</dbReference>
<dbReference type="SMR" id="O74382"/>
<dbReference type="BioGRID" id="277484">
    <property type="interactions" value="70"/>
</dbReference>
<dbReference type="FunCoup" id="O74382">
    <property type="interactions" value="562"/>
</dbReference>
<dbReference type="STRING" id="284812.O74382"/>
<dbReference type="iPTMnet" id="O74382"/>
<dbReference type="PaxDb" id="4896-SPBC3H7.07c.1"/>
<dbReference type="EnsemblFungi" id="SPBC3H7.07c.1">
    <property type="protein sequence ID" value="SPBC3H7.07c.1:pep"/>
    <property type="gene ID" value="SPBC3H7.07c"/>
</dbReference>
<dbReference type="KEGG" id="spo:2540968"/>
<dbReference type="PomBase" id="SPBC3H7.07c"/>
<dbReference type="VEuPathDB" id="FungiDB:SPBC3H7.07c"/>
<dbReference type="eggNOG" id="KOG1615">
    <property type="taxonomic scope" value="Eukaryota"/>
</dbReference>
<dbReference type="HOGENOM" id="CLU_036368_4_3_1"/>
<dbReference type="InParanoid" id="O74382"/>
<dbReference type="PhylomeDB" id="O74382"/>
<dbReference type="Reactome" id="R-SPO-977347">
    <property type="pathway name" value="Serine biosynthesis"/>
</dbReference>
<dbReference type="UniPathway" id="UPA00135">
    <property type="reaction ID" value="UER00198"/>
</dbReference>
<dbReference type="PRO" id="PR:O74382"/>
<dbReference type="Proteomes" id="UP000002485">
    <property type="component" value="Chromosome II"/>
</dbReference>
<dbReference type="GO" id="GO:0005737">
    <property type="term" value="C:cytoplasm"/>
    <property type="evidence" value="ECO:0000318"/>
    <property type="project" value="GO_Central"/>
</dbReference>
<dbReference type="GO" id="GO:0005829">
    <property type="term" value="C:cytosol"/>
    <property type="evidence" value="ECO:0000305"/>
    <property type="project" value="PomBase"/>
</dbReference>
<dbReference type="GO" id="GO:0036424">
    <property type="term" value="F:L-phosphoserine phosphatase activity"/>
    <property type="evidence" value="ECO:0000250"/>
    <property type="project" value="UniProtKB"/>
</dbReference>
<dbReference type="GO" id="GO:0000287">
    <property type="term" value="F:magnesium ion binding"/>
    <property type="evidence" value="ECO:0000250"/>
    <property type="project" value="UniProtKB"/>
</dbReference>
<dbReference type="GO" id="GO:0006564">
    <property type="term" value="P:L-serine biosynthetic process"/>
    <property type="evidence" value="ECO:0000266"/>
    <property type="project" value="PomBase"/>
</dbReference>
<dbReference type="GO" id="GO:0006563">
    <property type="term" value="P:L-serine metabolic process"/>
    <property type="evidence" value="ECO:0000250"/>
    <property type="project" value="UniProtKB"/>
</dbReference>
<dbReference type="CDD" id="cd07500">
    <property type="entry name" value="HAD_PSP"/>
    <property type="match status" value="1"/>
</dbReference>
<dbReference type="Gene3D" id="3.40.50.1000">
    <property type="entry name" value="HAD superfamily/HAD-like"/>
    <property type="match status" value="1"/>
</dbReference>
<dbReference type="InterPro" id="IPR050582">
    <property type="entry name" value="HAD-like_SerB"/>
</dbReference>
<dbReference type="InterPro" id="IPR036412">
    <property type="entry name" value="HAD-like_sf"/>
</dbReference>
<dbReference type="InterPro" id="IPR023214">
    <property type="entry name" value="HAD_sf"/>
</dbReference>
<dbReference type="InterPro" id="IPR004469">
    <property type="entry name" value="PSP"/>
</dbReference>
<dbReference type="NCBIfam" id="TIGR01488">
    <property type="entry name" value="HAD-SF-IB"/>
    <property type="match status" value="1"/>
</dbReference>
<dbReference type="NCBIfam" id="TIGR00338">
    <property type="entry name" value="serB"/>
    <property type="match status" value="1"/>
</dbReference>
<dbReference type="PANTHER" id="PTHR43344">
    <property type="entry name" value="PHOSPHOSERINE PHOSPHATASE"/>
    <property type="match status" value="1"/>
</dbReference>
<dbReference type="PANTHER" id="PTHR43344:SF2">
    <property type="entry name" value="PHOSPHOSERINE PHOSPHATASE"/>
    <property type="match status" value="1"/>
</dbReference>
<dbReference type="Pfam" id="PF00702">
    <property type="entry name" value="Hydrolase"/>
    <property type="match status" value="1"/>
</dbReference>
<dbReference type="SFLD" id="SFLDG01137">
    <property type="entry name" value="C1.6.1:_Phosphoserine_Phosphat"/>
    <property type="match status" value="1"/>
</dbReference>
<dbReference type="SFLD" id="SFLDF00029">
    <property type="entry name" value="phosphoserine_phosphatase"/>
    <property type="match status" value="1"/>
</dbReference>
<dbReference type="SUPFAM" id="SSF56784">
    <property type="entry name" value="HAD-like"/>
    <property type="match status" value="1"/>
</dbReference>